<proteinExistence type="evidence at transcript level"/>
<keyword id="KW-0067">ATP-binding</keyword>
<keyword id="KW-0547">Nucleotide-binding</keyword>
<keyword id="KW-1185">Reference proteome</keyword>
<keyword id="KW-0808">Transferase</keyword>
<keyword id="KW-0833">Ubl conjugation pathway</keyword>
<dbReference type="EC" id="2.3.2.23"/>
<dbReference type="EC" id="2.3.2.24"/>
<dbReference type="EMBL" id="DQ972955">
    <property type="protein sequence ID" value="ABI96191.1"/>
    <property type="molecule type" value="mRNA"/>
</dbReference>
<dbReference type="RefSeq" id="NP_001072141.1">
    <property type="nucleotide sequence ID" value="NM_001078673.1"/>
</dbReference>
<dbReference type="SMR" id="Q06AA9"/>
<dbReference type="FunCoup" id="Q06AA9">
    <property type="interactions" value="2469"/>
</dbReference>
<dbReference type="STRING" id="9823.ENSSSCP00000057683"/>
<dbReference type="PaxDb" id="9823-ENSSSCP00000009774"/>
<dbReference type="PeptideAtlas" id="Q06AA9"/>
<dbReference type="GeneID" id="780418"/>
<dbReference type="KEGG" id="ssc:780418"/>
<dbReference type="CTD" id="7323"/>
<dbReference type="eggNOG" id="KOG0417">
    <property type="taxonomic scope" value="Eukaryota"/>
</dbReference>
<dbReference type="InParanoid" id="Q06AA9"/>
<dbReference type="OrthoDB" id="7851174at2759"/>
<dbReference type="UniPathway" id="UPA00143"/>
<dbReference type="ChiTaRS" id="UBE2D2">
    <property type="organism name" value="pig"/>
</dbReference>
<dbReference type="Proteomes" id="UP000008227">
    <property type="component" value="Unplaced"/>
</dbReference>
<dbReference type="Proteomes" id="UP000314985">
    <property type="component" value="Unplaced"/>
</dbReference>
<dbReference type="Proteomes" id="UP000694570">
    <property type="component" value="Unplaced"/>
</dbReference>
<dbReference type="Proteomes" id="UP000694571">
    <property type="component" value="Unplaced"/>
</dbReference>
<dbReference type="Proteomes" id="UP000694720">
    <property type="component" value="Unplaced"/>
</dbReference>
<dbReference type="Proteomes" id="UP000694722">
    <property type="component" value="Unplaced"/>
</dbReference>
<dbReference type="Proteomes" id="UP000694723">
    <property type="component" value="Unplaced"/>
</dbReference>
<dbReference type="Proteomes" id="UP000694724">
    <property type="component" value="Unplaced"/>
</dbReference>
<dbReference type="Proteomes" id="UP000694725">
    <property type="component" value="Unplaced"/>
</dbReference>
<dbReference type="Proteomes" id="UP000694726">
    <property type="component" value="Unplaced"/>
</dbReference>
<dbReference type="Proteomes" id="UP000694727">
    <property type="component" value="Unplaced"/>
</dbReference>
<dbReference type="Proteomes" id="UP000694728">
    <property type="component" value="Unplaced"/>
</dbReference>
<dbReference type="GO" id="GO:0005634">
    <property type="term" value="C:nucleus"/>
    <property type="evidence" value="ECO:0000318"/>
    <property type="project" value="GO_Central"/>
</dbReference>
<dbReference type="GO" id="GO:0005524">
    <property type="term" value="F:ATP binding"/>
    <property type="evidence" value="ECO:0007669"/>
    <property type="project" value="UniProtKB-KW"/>
</dbReference>
<dbReference type="GO" id="GO:0061631">
    <property type="term" value="F:ubiquitin conjugating enzyme activity"/>
    <property type="evidence" value="ECO:0000318"/>
    <property type="project" value="GO_Central"/>
</dbReference>
<dbReference type="GO" id="GO:0004842">
    <property type="term" value="F:ubiquitin-protein transferase activity"/>
    <property type="evidence" value="ECO:0000250"/>
    <property type="project" value="UniProtKB"/>
</dbReference>
<dbReference type="GO" id="GO:0070979">
    <property type="term" value="P:protein K11-linked ubiquitination"/>
    <property type="evidence" value="ECO:0000318"/>
    <property type="project" value="GO_Central"/>
</dbReference>
<dbReference type="GO" id="GO:0070936">
    <property type="term" value="P:protein K48-linked ubiquitination"/>
    <property type="evidence" value="ECO:0000250"/>
    <property type="project" value="UniProtKB"/>
</dbReference>
<dbReference type="GO" id="GO:0006511">
    <property type="term" value="P:ubiquitin-dependent protein catabolic process"/>
    <property type="evidence" value="ECO:0000318"/>
    <property type="project" value="GO_Central"/>
</dbReference>
<dbReference type="CDD" id="cd23792">
    <property type="entry name" value="UBCc_UBE2D"/>
    <property type="match status" value="1"/>
</dbReference>
<dbReference type="FunFam" id="3.10.110.10:FF:000101">
    <property type="entry name" value="Ubiquitin-conjugating enzyme E2 D2"/>
    <property type="match status" value="1"/>
</dbReference>
<dbReference type="Gene3D" id="3.10.110.10">
    <property type="entry name" value="Ubiquitin Conjugating Enzyme"/>
    <property type="match status" value="1"/>
</dbReference>
<dbReference type="InterPro" id="IPR000608">
    <property type="entry name" value="UBQ-conjugat_E2_core"/>
</dbReference>
<dbReference type="InterPro" id="IPR023313">
    <property type="entry name" value="UBQ-conjugating_AS"/>
</dbReference>
<dbReference type="InterPro" id="IPR016135">
    <property type="entry name" value="UBQ-conjugating_enzyme/RWD"/>
</dbReference>
<dbReference type="PANTHER" id="PTHR24068">
    <property type="entry name" value="UBIQUITIN-CONJUGATING ENZYME E2"/>
    <property type="match status" value="1"/>
</dbReference>
<dbReference type="Pfam" id="PF00179">
    <property type="entry name" value="UQ_con"/>
    <property type="match status" value="1"/>
</dbReference>
<dbReference type="SMART" id="SM00212">
    <property type="entry name" value="UBCc"/>
    <property type="match status" value="1"/>
</dbReference>
<dbReference type="SUPFAM" id="SSF54495">
    <property type="entry name" value="UBC-like"/>
    <property type="match status" value="1"/>
</dbReference>
<dbReference type="PROSITE" id="PS00183">
    <property type="entry name" value="UBC_1"/>
    <property type="match status" value="1"/>
</dbReference>
<dbReference type="PROSITE" id="PS50127">
    <property type="entry name" value="UBC_2"/>
    <property type="match status" value="1"/>
</dbReference>
<reference key="1">
    <citation type="submission" date="2006-08" db="EMBL/GenBank/DDBJ databases">
        <authorList>
            <person name="Liu G.Y."/>
        </authorList>
    </citation>
    <scope>NUCLEOTIDE SEQUENCE [LARGE SCALE MRNA]</scope>
</reference>
<evidence type="ECO:0000250" key="1">
    <source>
        <dbReference type="UniProtKB" id="P62837"/>
    </source>
</evidence>
<evidence type="ECO:0000250" key="2">
    <source>
        <dbReference type="UniProtKB" id="P62838"/>
    </source>
</evidence>
<evidence type="ECO:0000255" key="3">
    <source>
        <dbReference type="PROSITE-ProRule" id="PRU00388"/>
    </source>
</evidence>
<evidence type="ECO:0000255" key="4">
    <source>
        <dbReference type="PROSITE-ProRule" id="PRU10133"/>
    </source>
</evidence>
<protein>
    <recommendedName>
        <fullName>Ubiquitin-conjugating enzyme E2 D2</fullName>
        <ecNumber>2.3.2.23</ecNumber>
    </recommendedName>
    <alternativeName>
        <fullName>(E3-independent) E2 ubiquitin-conjugating enzyme D2</fullName>
        <ecNumber>2.3.2.24</ecNumber>
    </alternativeName>
    <alternativeName>
        <fullName>E2 ubiquitin-conjugating enzyme D2</fullName>
    </alternativeName>
    <alternativeName>
        <fullName>Ubiquitin carrier protein D2</fullName>
    </alternativeName>
    <alternativeName>
        <fullName>Ubiquitin-protein ligase D2</fullName>
    </alternativeName>
</protein>
<comment type="function">
    <text evidence="1">Accepts ubiquitin from the E1 complex and catalyzes its covalent attachment to other proteins. In vitro catalyzes 'Lys-48'-linked polyubiquitination. Mediates the selective degradation of short-lived and abnormal proteins. Functions in the E6/E6-AP-induced ubiquitination of p53/TP53. Mediates ubiquitination of PEX5 and SQSTM1 and autoubiquitination of STUB1 and TRAF6. Involved in the signal-induced conjugation and subsequent degradation of NFKBIA, FBXW2-mediated GCM1 ubiquitination and degradation, MDM2-dependent degradation of p53/TP53 and the activation of MAVS in the mitochondria by RIGI in response to viral infection. Essential for viral activation of IRF3.</text>
</comment>
<comment type="catalytic activity">
    <reaction evidence="1 3 4">
        <text>S-ubiquitinyl-[E1 ubiquitin-activating enzyme]-L-cysteine + [E2 ubiquitin-conjugating enzyme]-L-cysteine = [E1 ubiquitin-activating enzyme]-L-cysteine + S-ubiquitinyl-[E2 ubiquitin-conjugating enzyme]-L-cysteine.</text>
        <dbReference type="EC" id="2.3.2.23"/>
    </reaction>
</comment>
<comment type="catalytic activity">
    <reaction evidence="1">
        <text>S-ubiquitinyl-[E1 ubiquitin-activating enzyme]-L-cysteine + [acceptor protein]-L-lysine = [E1 ubiquitin-activating enzyme]-L-cysteine + N(6)-monoubiquitinyl-[acceptor protein]-L-lysine.</text>
        <dbReference type="EC" id="2.3.2.24"/>
    </reaction>
</comment>
<comment type="pathway">
    <text evidence="3">Protein modification; protein ubiquitination.</text>
</comment>
<comment type="subunit">
    <text evidence="1 2">Interacts with SCF (SKP1-CUL1-F-box protein) E3 ubiquitin ligase complex. Interacts with CNOT4 (via RING domain). Interacts with E3 ubiquitin-protein ligases CBLC, PJA1 and PJA2. Interacts with PDZRN3. Interacts with PPP1R11. Interacts with E3 ubiquitin-protein ligase PHF7; the interaction inhibits cleavage of PHF7 and promotes association of the complex with the nucleosome core particle (By similarity).</text>
</comment>
<comment type="similarity">
    <text evidence="3">Belongs to the ubiquitin-conjugating enzyme family.</text>
</comment>
<gene>
    <name type="primary">UBE2D2</name>
    <name type="synonym">UBC4</name>
    <name type="synonym">UBCH4</name>
    <name type="synonym">UBCH5B</name>
</gene>
<accession>Q06AA9</accession>
<sequence length="147" mass="16737">MALKRIHKELNDLARDPPAQCSAGPVGDDMFHWQATIMGPNDSPYQGGVFFLTIHFPTDYPFKPPKVAFTTRIYHPNINSNGSICLDILRSQWSPALTISKVLLSICSLLCDPNPDDPLVPEIARIYKTDRDKYNRISREWTQKYAM</sequence>
<organism>
    <name type="scientific">Sus scrofa</name>
    <name type="common">Pig</name>
    <dbReference type="NCBI Taxonomy" id="9823"/>
    <lineage>
        <taxon>Eukaryota</taxon>
        <taxon>Metazoa</taxon>
        <taxon>Chordata</taxon>
        <taxon>Craniata</taxon>
        <taxon>Vertebrata</taxon>
        <taxon>Euteleostomi</taxon>
        <taxon>Mammalia</taxon>
        <taxon>Eutheria</taxon>
        <taxon>Laurasiatheria</taxon>
        <taxon>Artiodactyla</taxon>
        <taxon>Suina</taxon>
        <taxon>Suidae</taxon>
        <taxon>Sus</taxon>
    </lineage>
</organism>
<name>UB2D2_PIG</name>
<feature type="chain" id="PRO_0000270203" description="Ubiquitin-conjugating enzyme E2 D2">
    <location>
        <begin position="1"/>
        <end position="147"/>
    </location>
</feature>
<feature type="domain" description="UBC core" evidence="3">
    <location>
        <begin position="1"/>
        <end position="147"/>
    </location>
</feature>
<feature type="active site" description="Glycyl thioester intermediate" evidence="3 4">
    <location>
        <position position="85"/>
    </location>
</feature>